<organism>
    <name type="scientific">Schistosoma mansoni</name>
    <name type="common">Blood fluke</name>
    <dbReference type="NCBI Taxonomy" id="6183"/>
    <lineage>
        <taxon>Eukaryota</taxon>
        <taxon>Metazoa</taxon>
        <taxon>Spiralia</taxon>
        <taxon>Lophotrochozoa</taxon>
        <taxon>Platyhelminthes</taxon>
        <taxon>Trematoda</taxon>
        <taxon>Digenea</taxon>
        <taxon>Strigeidida</taxon>
        <taxon>Schistosomatoidea</taxon>
        <taxon>Schistosomatidae</taxon>
        <taxon>Schistosoma</taxon>
    </lineage>
</organism>
<name>IF5A_SCHMA</name>
<dbReference type="EMBL" id="Z48724">
    <property type="protein sequence ID" value="CAA88616.1"/>
    <property type="molecule type" value="Genomic_DNA"/>
</dbReference>
<dbReference type="SMR" id="Q26571"/>
<dbReference type="STRING" id="6183.Q26571"/>
<dbReference type="eggNOG" id="KOG3271">
    <property type="taxonomic scope" value="Eukaryota"/>
</dbReference>
<dbReference type="HOGENOM" id="CLU_102600_0_0_1"/>
<dbReference type="InParanoid" id="Q26571"/>
<dbReference type="Proteomes" id="UP000008854">
    <property type="component" value="Unassembled WGS sequence"/>
</dbReference>
<dbReference type="GO" id="GO:0005737">
    <property type="term" value="C:cytoplasm"/>
    <property type="evidence" value="ECO:0007669"/>
    <property type="project" value="UniProtKB-SubCell"/>
</dbReference>
<dbReference type="GO" id="GO:0043022">
    <property type="term" value="F:ribosome binding"/>
    <property type="evidence" value="ECO:0007669"/>
    <property type="project" value="InterPro"/>
</dbReference>
<dbReference type="GO" id="GO:0003723">
    <property type="term" value="F:RNA binding"/>
    <property type="evidence" value="ECO:0007669"/>
    <property type="project" value="UniProtKB-KW"/>
</dbReference>
<dbReference type="GO" id="GO:0003746">
    <property type="term" value="F:translation elongation factor activity"/>
    <property type="evidence" value="ECO:0007669"/>
    <property type="project" value="UniProtKB-KW"/>
</dbReference>
<dbReference type="GO" id="GO:0045901">
    <property type="term" value="P:positive regulation of translational elongation"/>
    <property type="evidence" value="ECO:0007669"/>
    <property type="project" value="InterPro"/>
</dbReference>
<dbReference type="GO" id="GO:0045905">
    <property type="term" value="P:positive regulation of translational termination"/>
    <property type="evidence" value="ECO:0007669"/>
    <property type="project" value="InterPro"/>
</dbReference>
<dbReference type="Gene3D" id="2.30.30.30">
    <property type="match status" value="1"/>
</dbReference>
<dbReference type="InterPro" id="IPR001884">
    <property type="entry name" value="IF5A-like"/>
</dbReference>
<dbReference type="InterPro" id="IPR048670">
    <property type="entry name" value="IF5A-like_N"/>
</dbReference>
<dbReference type="InterPro" id="IPR014722">
    <property type="entry name" value="Rib_uL2_dom2"/>
</dbReference>
<dbReference type="InterPro" id="IPR019769">
    <property type="entry name" value="Trans_elong_IF5A_hypusine_site"/>
</dbReference>
<dbReference type="InterPro" id="IPR008991">
    <property type="entry name" value="Translation_prot_SH3-like_sf"/>
</dbReference>
<dbReference type="PANTHER" id="PTHR11673">
    <property type="entry name" value="TRANSLATION INITIATION FACTOR 5A FAMILY MEMBER"/>
    <property type="match status" value="1"/>
</dbReference>
<dbReference type="Pfam" id="PF21485">
    <property type="entry name" value="IF5A-like_N"/>
    <property type="match status" value="1"/>
</dbReference>
<dbReference type="SUPFAM" id="SSF50104">
    <property type="entry name" value="Translation proteins SH3-like domain"/>
    <property type="match status" value="1"/>
</dbReference>
<dbReference type="PROSITE" id="PS00302">
    <property type="entry name" value="IF5A_HYPUSINE"/>
    <property type="match status" value="1"/>
</dbReference>
<feature type="chain" id="PRO_0000142459" description="Eukaryotic translation initiation factor 5A">
    <location>
        <begin position="1"/>
        <end position="52" status="greater than"/>
    </location>
</feature>
<feature type="modified residue" description="Hypusine" evidence="1">
    <location>
        <position position="42"/>
    </location>
</feature>
<feature type="non-terminal residue">
    <location>
        <position position="52"/>
    </location>
</feature>
<comment type="function">
    <text evidence="2">Translation factor that promotes translation elongation and termination, particularly upon ribosome stalling at specific amino acid sequence contexts (By similarity). Binds between the exit (E) and peptidyl (P) site of the ribosome and promotes rescue of stalled ribosome: specifically required for efficient translation of polyproline-containing peptides as well as other motifs that stall the ribosome (By similarity). Acts as a ribosome quality control (RQC) cofactor by joining the RQC complex to facilitate peptidyl transfer during CAT tailing step (By similarity).</text>
</comment>
<comment type="subcellular location">
    <subcellularLocation>
        <location evidence="2">Cytoplasm</location>
    </subcellularLocation>
</comment>
<comment type="PTM">
    <text evidence="1">Lys-42 undergoes hypusination, a unique post-translational modification that consists in the addition of a butylamino group from spermidine to lysine side chain, leading to the formation of the unusual amino acid hypusine. eIF-5As are the only known proteins to undergo this modification, which is essential for their function.</text>
</comment>
<comment type="similarity">
    <text evidence="3">Belongs to the eIF-5A family.</text>
</comment>
<protein>
    <recommendedName>
        <fullName>Eukaryotic translation initiation factor 5A</fullName>
        <shortName>eIF-5A</shortName>
    </recommendedName>
</protein>
<proteinExistence type="inferred from homology"/>
<sequence length="52" mass="5496">MGDFGASKTLPKQCSALRKGGHVVMKDRPCKIVEMSTSKTGKHGSAKVHLVG</sequence>
<reference key="1">
    <citation type="thesis" date="1996" institute="Heinrich-Heine University / Duesseldorf" country="Germany">
        <authorList>
            <person name="Schuessler P."/>
        </authorList>
    </citation>
    <scope>NUCLEOTIDE SEQUENCE [GENOMIC DNA]</scope>
    <source>
        <strain>Liberian</strain>
    </source>
</reference>
<accession>Q26571</accession>
<keyword id="KW-0963">Cytoplasm</keyword>
<keyword id="KW-0251">Elongation factor</keyword>
<keyword id="KW-0385">Hypusine</keyword>
<keyword id="KW-0648">Protein biosynthesis</keyword>
<keyword id="KW-1185">Reference proteome</keyword>
<keyword id="KW-0694">RNA-binding</keyword>
<evidence type="ECO:0000250" key="1">
    <source>
        <dbReference type="UniProtKB" id="A4GVE9"/>
    </source>
</evidence>
<evidence type="ECO:0000250" key="2">
    <source>
        <dbReference type="UniProtKB" id="P23301"/>
    </source>
</evidence>
<evidence type="ECO:0000305" key="3"/>